<accession>Q739J0</accession>
<gene>
    <name evidence="1" type="primary">nbaC</name>
    <name type="ordered locus">BCE_2151</name>
</gene>
<name>3HAO_BACC1</name>
<proteinExistence type="inferred from homology"/>
<evidence type="ECO:0000255" key="1">
    <source>
        <dbReference type="HAMAP-Rule" id="MF_00825"/>
    </source>
</evidence>
<protein>
    <recommendedName>
        <fullName evidence="1">3-hydroxyanthranilate 3,4-dioxygenase</fullName>
        <ecNumber evidence="1">1.13.11.6</ecNumber>
    </recommendedName>
    <alternativeName>
        <fullName evidence="1">3-hydroxyanthranilate oxygenase</fullName>
        <shortName evidence="1">3-HAO</shortName>
    </alternativeName>
    <alternativeName>
        <fullName evidence="1">3-hydroxyanthranilic acid dioxygenase</fullName>
        <shortName evidence="1">HAD</shortName>
    </alternativeName>
</protein>
<dbReference type="EC" id="1.13.11.6" evidence="1"/>
<dbReference type="EMBL" id="AE017194">
    <property type="protein sequence ID" value="AAS41072.1"/>
    <property type="molecule type" value="Genomic_DNA"/>
</dbReference>
<dbReference type="SMR" id="Q739J0"/>
<dbReference type="KEGG" id="bca:BCE_2151"/>
<dbReference type="HOGENOM" id="CLU_095765_0_0_9"/>
<dbReference type="UniPathway" id="UPA00253">
    <property type="reaction ID" value="UER00330"/>
</dbReference>
<dbReference type="Proteomes" id="UP000002527">
    <property type="component" value="Chromosome"/>
</dbReference>
<dbReference type="GO" id="GO:0005737">
    <property type="term" value="C:cytoplasm"/>
    <property type="evidence" value="ECO:0007669"/>
    <property type="project" value="TreeGrafter"/>
</dbReference>
<dbReference type="GO" id="GO:0000334">
    <property type="term" value="F:3-hydroxyanthranilate 3,4-dioxygenase activity"/>
    <property type="evidence" value="ECO:0007669"/>
    <property type="project" value="UniProtKB-UniRule"/>
</dbReference>
<dbReference type="GO" id="GO:0008198">
    <property type="term" value="F:ferrous iron binding"/>
    <property type="evidence" value="ECO:0007669"/>
    <property type="project" value="UniProtKB-UniRule"/>
</dbReference>
<dbReference type="GO" id="GO:0043420">
    <property type="term" value="P:anthranilate metabolic process"/>
    <property type="evidence" value="ECO:0007669"/>
    <property type="project" value="UniProtKB-UniRule"/>
</dbReference>
<dbReference type="GO" id="GO:0006569">
    <property type="term" value="P:L-tryptophan catabolic process"/>
    <property type="evidence" value="ECO:0007669"/>
    <property type="project" value="UniProtKB-UniRule"/>
</dbReference>
<dbReference type="GO" id="GO:0009435">
    <property type="term" value="P:NAD biosynthetic process"/>
    <property type="evidence" value="ECO:0007669"/>
    <property type="project" value="UniProtKB-UniPathway"/>
</dbReference>
<dbReference type="GO" id="GO:0019805">
    <property type="term" value="P:quinolinate biosynthetic process"/>
    <property type="evidence" value="ECO:0007669"/>
    <property type="project" value="UniProtKB-UniRule"/>
</dbReference>
<dbReference type="CDD" id="cd06123">
    <property type="entry name" value="cupin_HAO"/>
    <property type="match status" value="1"/>
</dbReference>
<dbReference type="Gene3D" id="2.60.120.10">
    <property type="entry name" value="Jelly Rolls"/>
    <property type="match status" value="1"/>
</dbReference>
<dbReference type="HAMAP" id="MF_00825">
    <property type="entry name" value="3_HAO"/>
    <property type="match status" value="1"/>
</dbReference>
<dbReference type="InterPro" id="IPR010329">
    <property type="entry name" value="3hydroanth_dOase"/>
</dbReference>
<dbReference type="InterPro" id="IPR014710">
    <property type="entry name" value="RmlC-like_jellyroll"/>
</dbReference>
<dbReference type="InterPro" id="IPR011051">
    <property type="entry name" value="RmlC_Cupin_sf"/>
</dbReference>
<dbReference type="NCBIfam" id="TIGR03037">
    <property type="entry name" value="anthran_nbaC"/>
    <property type="match status" value="1"/>
</dbReference>
<dbReference type="NCBIfam" id="NF009763">
    <property type="entry name" value="PRK13264.1"/>
    <property type="match status" value="1"/>
</dbReference>
<dbReference type="PANTHER" id="PTHR15497">
    <property type="entry name" value="3-HYDROXYANTHRANILATE 3,4-DIOXYGENASE"/>
    <property type="match status" value="1"/>
</dbReference>
<dbReference type="PANTHER" id="PTHR15497:SF1">
    <property type="entry name" value="3-HYDROXYANTHRANILATE 3,4-DIOXYGENASE"/>
    <property type="match status" value="1"/>
</dbReference>
<dbReference type="Pfam" id="PF06052">
    <property type="entry name" value="3-HAO"/>
    <property type="match status" value="1"/>
</dbReference>
<dbReference type="SUPFAM" id="SSF51182">
    <property type="entry name" value="RmlC-like cupins"/>
    <property type="match status" value="1"/>
</dbReference>
<comment type="function">
    <text evidence="1">Catalyzes the oxidative ring opening of 3-hydroxyanthranilate to 2-amino-3-carboxymuconate semialdehyde, which spontaneously cyclizes to quinolinate.</text>
</comment>
<comment type="catalytic activity">
    <reaction evidence="1">
        <text>3-hydroxyanthranilate + O2 = (2Z,4Z)-2-amino-3-carboxymuconate 6-semialdehyde</text>
        <dbReference type="Rhea" id="RHEA:17953"/>
        <dbReference type="ChEBI" id="CHEBI:15379"/>
        <dbReference type="ChEBI" id="CHEBI:36559"/>
        <dbReference type="ChEBI" id="CHEBI:77612"/>
        <dbReference type="EC" id="1.13.11.6"/>
    </reaction>
</comment>
<comment type="cofactor">
    <cofactor evidence="1">
        <name>Fe(2+)</name>
        <dbReference type="ChEBI" id="CHEBI:29033"/>
    </cofactor>
    <text evidence="1">Binds 2 Fe(2+) ions per subunit.</text>
</comment>
<comment type="pathway">
    <text evidence="1">Cofactor biosynthesis; NAD(+) biosynthesis; quinolinate from L-kynurenine: step 3/3.</text>
</comment>
<comment type="similarity">
    <text evidence="1">Belongs to the 3-HAO family.</text>
</comment>
<feature type="chain" id="PRO_0000245473" description="3-hydroxyanthranilate 3,4-dioxygenase">
    <location>
        <begin position="1"/>
        <end position="179"/>
    </location>
</feature>
<feature type="binding site" evidence="1">
    <location>
        <position position="47"/>
    </location>
    <ligand>
        <name>O2</name>
        <dbReference type="ChEBI" id="CHEBI:15379"/>
    </ligand>
</feature>
<feature type="binding site" evidence="1">
    <location>
        <position position="51"/>
    </location>
    <ligand>
        <name>Fe cation</name>
        <dbReference type="ChEBI" id="CHEBI:24875"/>
        <label>1</label>
        <note>catalytic</note>
    </ligand>
</feature>
<feature type="binding site" evidence="1">
    <location>
        <position position="57"/>
    </location>
    <ligand>
        <name>Fe cation</name>
        <dbReference type="ChEBI" id="CHEBI:24875"/>
        <label>1</label>
        <note>catalytic</note>
    </ligand>
</feature>
<feature type="binding site" evidence="1">
    <location>
        <position position="57"/>
    </location>
    <ligand>
        <name>substrate</name>
    </ligand>
</feature>
<feature type="binding site" evidence="1">
    <location>
        <position position="96"/>
    </location>
    <ligand>
        <name>Fe cation</name>
        <dbReference type="ChEBI" id="CHEBI:24875"/>
        <label>1</label>
        <note>catalytic</note>
    </ligand>
</feature>
<feature type="binding site" evidence="1">
    <location>
        <position position="100"/>
    </location>
    <ligand>
        <name>substrate</name>
    </ligand>
</feature>
<feature type="binding site" evidence="1">
    <location>
        <position position="110"/>
    </location>
    <ligand>
        <name>substrate</name>
    </ligand>
</feature>
<feature type="binding site" evidence="1">
    <location>
        <position position="125"/>
    </location>
    <ligand>
        <name>Fe cation</name>
        <dbReference type="ChEBI" id="CHEBI:24875"/>
        <label>2</label>
    </ligand>
</feature>
<feature type="binding site" evidence="1">
    <location>
        <position position="128"/>
    </location>
    <ligand>
        <name>Fe cation</name>
        <dbReference type="ChEBI" id="CHEBI:24875"/>
        <label>2</label>
    </ligand>
</feature>
<feature type="binding site" evidence="1">
    <location>
        <position position="162"/>
    </location>
    <ligand>
        <name>Fe cation</name>
        <dbReference type="ChEBI" id="CHEBI:24875"/>
        <label>2</label>
    </ligand>
</feature>
<feature type="binding site" evidence="1">
    <location>
        <position position="165"/>
    </location>
    <ligand>
        <name>Fe cation</name>
        <dbReference type="ChEBI" id="CHEBI:24875"/>
        <label>2</label>
    </ligand>
</feature>
<sequence length="179" mass="21084">MSKTLQSFNLLKWIDENKELLKPPVNNKVIWQDSEFIAMILGGPNRRRDFHVDPSDEFFYQIKGECYVECITEEGKREVVTVKEGDVFMLPAMVPHSPHRVANTYGLVIERKRNQGELEDFVWFCDECNHEMHRVRVQLSDIEKQVKEAIHSFNSNKEIRACKNCGHIMPEEVEEWKCE</sequence>
<organism>
    <name type="scientific">Bacillus cereus (strain ATCC 10987 / NRS 248)</name>
    <dbReference type="NCBI Taxonomy" id="222523"/>
    <lineage>
        <taxon>Bacteria</taxon>
        <taxon>Bacillati</taxon>
        <taxon>Bacillota</taxon>
        <taxon>Bacilli</taxon>
        <taxon>Bacillales</taxon>
        <taxon>Bacillaceae</taxon>
        <taxon>Bacillus</taxon>
        <taxon>Bacillus cereus group</taxon>
    </lineage>
</organism>
<reference key="1">
    <citation type="journal article" date="2004" name="Nucleic Acids Res.">
        <title>The genome sequence of Bacillus cereus ATCC 10987 reveals metabolic adaptations and a large plasmid related to Bacillus anthracis pXO1.</title>
        <authorList>
            <person name="Rasko D.A."/>
            <person name="Ravel J."/>
            <person name="Oekstad O.A."/>
            <person name="Helgason E."/>
            <person name="Cer R.Z."/>
            <person name="Jiang L."/>
            <person name="Shores K.A."/>
            <person name="Fouts D.E."/>
            <person name="Tourasse N.J."/>
            <person name="Angiuoli S.V."/>
            <person name="Kolonay J.F."/>
            <person name="Nelson W.C."/>
            <person name="Kolstoe A.-B."/>
            <person name="Fraser C.M."/>
            <person name="Read T.D."/>
        </authorList>
    </citation>
    <scope>NUCLEOTIDE SEQUENCE [LARGE SCALE GENOMIC DNA]</scope>
    <source>
        <strain>ATCC 10987 / NRS 248</strain>
    </source>
</reference>
<keyword id="KW-0223">Dioxygenase</keyword>
<keyword id="KW-0408">Iron</keyword>
<keyword id="KW-0479">Metal-binding</keyword>
<keyword id="KW-0560">Oxidoreductase</keyword>
<keyword id="KW-0662">Pyridine nucleotide biosynthesis</keyword>